<organism>
    <name type="scientific">Bradyrhizobium sp. (strain BTAi1 / ATCC BAA-1182)</name>
    <dbReference type="NCBI Taxonomy" id="288000"/>
    <lineage>
        <taxon>Bacteria</taxon>
        <taxon>Pseudomonadati</taxon>
        <taxon>Pseudomonadota</taxon>
        <taxon>Alphaproteobacteria</taxon>
        <taxon>Hyphomicrobiales</taxon>
        <taxon>Nitrobacteraceae</taxon>
        <taxon>Bradyrhizobium</taxon>
    </lineage>
</organism>
<protein>
    <recommendedName>
        <fullName evidence="1">Serine hydroxymethyltransferase</fullName>
        <shortName evidence="1">SHMT</shortName>
        <shortName evidence="1">Serine methylase</shortName>
        <ecNumber evidence="1">2.1.2.1</ecNumber>
    </recommendedName>
</protein>
<feature type="chain" id="PRO_0000369901" description="Serine hydroxymethyltransferase">
    <location>
        <begin position="1"/>
        <end position="434"/>
    </location>
</feature>
<feature type="binding site" evidence="1">
    <location>
        <position position="133"/>
    </location>
    <ligand>
        <name>(6S)-5,6,7,8-tetrahydrofolate</name>
        <dbReference type="ChEBI" id="CHEBI:57453"/>
    </ligand>
</feature>
<feature type="binding site" evidence="1">
    <location>
        <begin position="137"/>
        <end position="139"/>
    </location>
    <ligand>
        <name>(6S)-5,6,7,8-tetrahydrofolate</name>
        <dbReference type="ChEBI" id="CHEBI:57453"/>
    </ligand>
</feature>
<feature type="site" description="Plays an important role in substrate specificity" evidence="1">
    <location>
        <position position="241"/>
    </location>
</feature>
<feature type="modified residue" description="N6-(pyridoxal phosphate)lysine" evidence="1">
    <location>
        <position position="242"/>
    </location>
</feature>
<comment type="function">
    <text evidence="1">Catalyzes the reversible interconversion of serine and glycine with tetrahydrofolate (THF) serving as the one-carbon carrier. This reaction serves as the major source of one-carbon groups required for the biosynthesis of purines, thymidylate, methionine, and other important biomolecules. Also exhibits THF-independent aldolase activity toward beta-hydroxyamino acids, producing glycine and aldehydes, via a retro-aldol mechanism.</text>
</comment>
<comment type="catalytic activity">
    <reaction evidence="1">
        <text>(6R)-5,10-methylene-5,6,7,8-tetrahydrofolate + glycine + H2O = (6S)-5,6,7,8-tetrahydrofolate + L-serine</text>
        <dbReference type="Rhea" id="RHEA:15481"/>
        <dbReference type="ChEBI" id="CHEBI:15377"/>
        <dbReference type="ChEBI" id="CHEBI:15636"/>
        <dbReference type="ChEBI" id="CHEBI:33384"/>
        <dbReference type="ChEBI" id="CHEBI:57305"/>
        <dbReference type="ChEBI" id="CHEBI:57453"/>
        <dbReference type="EC" id="2.1.2.1"/>
    </reaction>
</comment>
<comment type="cofactor">
    <cofactor evidence="1">
        <name>pyridoxal 5'-phosphate</name>
        <dbReference type="ChEBI" id="CHEBI:597326"/>
    </cofactor>
</comment>
<comment type="pathway">
    <text evidence="1">One-carbon metabolism; tetrahydrofolate interconversion.</text>
</comment>
<comment type="pathway">
    <text evidence="1">Amino-acid biosynthesis; glycine biosynthesis; glycine from L-serine: step 1/1.</text>
</comment>
<comment type="subunit">
    <text evidence="1">Homodimer.</text>
</comment>
<comment type="subcellular location">
    <subcellularLocation>
        <location evidence="1">Cytoplasm</location>
    </subcellularLocation>
</comment>
<comment type="similarity">
    <text evidence="1">Belongs to the SHMT family.</text>
</comment>
<sequence length="434" mass="46265">MTASSAKPASSVDSFFSATLAEADPEIAAAIKGELGRQRHEIELIASENIVSRAVLEAQGSVMTNKYAEGYPGARYYGGCEWVDVAENLAIDRAKKLFGANFANVQPNSGSQMNQAVFLALLQPGDTFMGLDLAAGGHLTHGSPVNMSGKWFKAAHYTVRRDDHLIDMDAVAKQAEEVKPKLIIAGGSAYSRPWDFKRFREIADHVGAYLLVDMAHFAGLVAGGAHASPVPHAHIVTTTTHKSLRGPRGGLILWNDEQFTKKLNSAIFPGLQGGPLMHVIAAKAVAFAEALRPEFKTYAKNIVENAKALAESLRAQGFDIVSGGTDNHLMLVDLRPKGLKGNVSEKALVRAGITCNKNGIPFDPEKPFVTSGLRLGTPAATTRGFGVAEFQQVGSLIAEVLNAIAQAPDGSAPLVEAAVKAKVKALTDRFPIYQ</sequence>
<proteinExistence type="inferred from homology"/>
<accession>A5EKI3</accession>
<dbReference type="EC" id="2.1.2.1" evidence="1"/>
<dbReference type="EMBL" id="CP000494">
    <property type="protein sequence ID" value="ABQ36677.1"/>
    <property type="molecule type" value="Genomic_DNA"/>
</dbReference>
<dbReference type="RefSeq" id="WP_012044666.1">
    <property type="nucleotide sequence ID" value="NC_009485.1"/>
</dbReference>
<dbReference type="SMR" id="A5EKI3"/>
<dbReference type="STRING" id="288000.BBta_4649"/>
<dbReference type="KEGG" id="bbt:BBta_4649"/>
<dbReference type="eggNOG" id="COG0112">
    <property type="taxonomic scope" value="Bacteria"/>
</dbReference>
<dbReference type="HOGENOM" id="CLU_022477_2_1_5"/>
<dbReference type="OrthoDB" id="9803846at2"/>
<dbReference type="UniPathway" id="UPA00193"/>
<dbReference type="UniPathway" id="UPA00288">
    <property type="reaction ID" value="UER01023"/>
</dbReference>
<dbReference type="Proteomes" id="UP000000246">
    <property type="component" value="Chromosome"/>
</dbReference>
<dbReference type="GO" id="GO:0005829">
    <property type="term" value="C:cytosol"/>
    <property type="evidence" value="ECO:0007669"/>
    <property type="project" value="TreeGrafter"/>
</dbReference>
<dbReference type="GO" id="GO:0004372">
    <property type="term" value="F:glycine hydroxymethyltransferase activity"/>
    <property type="evidence" value="ECO:0007669"/>
    <property type="project" value="UniProtKB-UniRule"/>
</dbReference>
<dbReference type="GO" id="GO:0030170">
    <property type="term" value="F:pyridoxal phosphate binding"/>
    <property type="evidence" value="ECO:0007669"/>
    <property type="project" value="UniProtKB-UniRule"/>
</dbReference>
<dbReference type="GO" id="GO:0019264">
    <property type="term" value="P:glycine biosynthetic process from serine"/>
    <property type="evidence" value="ECO:0007669"/>
    <property type="project" value="UniProtKB-UniRule"/>
</dbReference>
<dbReference type="GO" id="GO:0035999">
    <property type="term" value="P:tetrahydrofolate interconversion"/>
    <property type="evidence" value="ECO:0007669"/>
    <property type="project" value="UniProtKB-UniRule"/>
</dbReference>
<dbReference type="CDD" id="cd00378">
    <property type="entry name" value="SHMT"/>
    <property type="match status" value="1"/>
</dbReference>
<dbReference type="FunFam" id="3.40.640.10:FF:000001">
    <property type="entry name" value="Serine hydroxymethyltransferase"/>
    <property type="match status" value="1"/>
</dbReference>
<dbReference type="FunFam" id="3.90.1150.10:FF:000003">
    <property type="entry name" value="Serine hydroxymethyltransferase"/>
    <property type="match status" value="1"/>
</dbReference>
<dbReference type="Gene3D" id="3.90.1150.10">
    <property type="entry name" value="Aspartate Aminotransferase, domain 1"/>
    <property type="match status" value="1"/>
</dbReference>
<dbReference type="Gene3D" id="3.40.640.10">
    <property type="entry name" value="Type I PLP-dependent aspartate aminotransferase-like (Major domain)"/>
    <property type="match status" value="1"/>
</dbReference>
<dbReference type="HAMAP" id="MF_00051">
    <property type="entry name" value="SHMT"/>
    <property type="match status" value="1"/>
</dbReference>
<dbReference type="InterPro" id="IPR015424">
    <property type="entry name" value="PyrdxlP-dep_Trfase"/>
</dbReference>
<dbReference type="InterPro" id="IPR015421">
    <property type="entry name" value="PyrdxlP-dep_Trfase_major"/>
</dbReference>
<dbReference type="InterPro" id="IPR015422">
    <property type="entry name" value="PyrdxlP-dep_Trfase_small"/>
</dbReference>
<dbReference type="InterPro" id="IPR001085">
    <property type="entry name" value="Ser_HO-MeTrfase"/>
</dbReference>
<dbReference type="InterPro" id="IPR049943">
    <property type="entry name" value="Ser_HO-MeTrfase-like"/>
</dbReference>
<dbReference type="InterPro" id="IPR019798">
    <property type="entry name" value="Ser_HO-MeTrfase_PLP_BS"/>
</dbReference>
<dbReference type="InterPro" id="IPR039429">
    <property type="entry name" value="SHMT-like_dom"/>
</dbReference>
<dbReference type="NCBIfam" id="NF000586">
    <property type="entry name" value="PRK00011.1"/>
    <property type="match status" value="1"/>
</dbReference>
<dbReference type="PANTHER" id="PTHR11680">
    <property type="entry name" value="SERINE HYDROXYMETHYLTRANSFERASE"/>
    <property type="match status" value="1"/>
</dbReference>
<dbReference type="PANTHER" id="PTHR11680:SF35">
    <property type="entry name" value="SERINE HYDROXYMETHYLTRANSFERASE 1"/>
    <property type="match status" value="1"/>
</dbReference>
<dbReference type="Pfam" id="PF00464">
    <property type="entry name" value="SHMT"/>
    <property type="match status" value="1"/>
</dbReference>
<dbReference type="PIRSF" id="PIRSF000412">
    <property type="entry name" value="SHMT"/>
    <property type="match status" value="1"/>
</dbReference>
<dbReference type="SUPFAM" id="SSF53383">
    <property type="entry name" value="PLP-dependent transferases"/>
    <property type="match status" value="1"/>
</dbReference>
<dbReference type="PROSITE" id="PS00096">
    <property type="entry name" value="SHMT"/>
    <property type="match status" value="1"/>
</dbReference>
<keyword id="KW-0028">Amino-acid biosynthesis</keyword>
<keyword id="KW-0963">Cytoplasm</keyword>
<keyword id="KW-0554">One-carbon metabolism</keyword>
<keyword id="KW-0663">Pyridoxal phosphate</keyword>
<keyword id="KW-1185">Reference proteome</keyword>
<keyword id="KW-0808">Transferase</keyword>
<name>GLYA_BRASB</name>
<gene>
    <name evidence="1" type="primary">glyA</name>
    <name type="ordered locus">BBta_4649</name>
</gene>
<reference key="1">
    <citation type="journal article" date="2007" name="Science">
        <title>Legumes symbioses: absence of nod genes in photosynthetic bradyrhizobia.</title>
        <authorList>
            <person name="Giraud E."/>
            <person name="Moulin L."/>
            <person name="Vallenet D."/>
            <person name="Barbe V."/>
            <person name="Cytryn E."/>
            <person name="Avarre J.-C."/>
            <person name="Jaubert M."/>
            <person name="Simon D."/>
            <person name="Cartieaux F."/>
            <person name="Prin Y."/>
            <person name="Bena G."/>
            <person name="Hannibal L."/>
            <person name="Fardoux J."/>
            <person name="Kojadinovic M."/>
            <person name="Vuillet L."/>
            <person name="Lajus A."/>
            <person name="Cruveiller S."/>
            <person name="Rouy Z."/>
            <person name="Mangenot S."/>
            <person name="Segurens B."/>
            <person name="Dossat C."/>
            <person name="Franck W.L."/>
            <person name="Chang W.-S."/>
            <person name="Saunders E."/>
            <person name="Bruce D."/>
            <person name="Richardson P."/>
            <person name="Normand P."/>
            <person name="Dreyfus B."/>
            <person name="Pignol D."/>
            <person name="Stacey G."/>
            <person name="Emerich D."/>
            <person name="Vermeglio A."/>
            <person name="Medigue C."/>
            <person name="Sadowsky M."/>
        </authorList>
    </citation>
    <scope>NUCLEOTIDE SEQUENCE [LARGE SCALE GENOMIC DNA]</scope>
    <source>
        <strain>BTAi1 / ATCC BAA-1182</strain>
    </source>
</reference>
<evidence type="ECO:0000255" key="1">
    <source>
        <dbReference type="HAMAP-Rule" id="MF_00051"/>
    </source>
</evidence>